<reference key="1">
    <citation type="journal article" date="2010" name="Genome Biol.">
        <title>Structure and dynamics of the pan-genome of Streptococcus pneumoniae and closely related species.</title>
        <authorList>
            <person name="Donati C."/>
            <person name="Hiller N.L."/>
            <person name="Tettelin H."/>
            <person name="Muzzi A."/>
            <person name="Croucher N.J."/>
            <person name="Angiuoli S.V."/>
            <person name="Oggioni M."/>
            <person name="Dunning Hotopp J.C."/>
            <person name="Hu F.Z."/>
            <person name="Riley D.R."/>
            <person name="Covacci A."/>
            <person name="Mitchell T.J."/>
            <person name="Bentley S.D."/>
            <person name="Kilian M."/>
            <person name="Ehrlich G.D."/>
            <person name="Rappuoli R."/>
            <person name="Moxon E.R."/>
            <person name="Masignani V."/>
        </authorList>
    </citation>
    <scope>NUCLEOTIDE SEQUENCE [LARGE SCALE GENOMIC DNA]</scope>
    <source>
        <strain>P1031</strain>
    </source>
</reference>
<proteinExistence type="inferred from homology"/>
<name>AROC_STRZP</name>
<keyword id="KW-0028">Amino-acid biosynthesis</keyword>
<keyword id="KW-0057">Aromatic amino acid biosynthesis</keyword>
<keyword id="KW-0274">FAD</keyword>
<keyword id="KW-0285">Flavoprotein</keyword>
<keyword id="KW-0288">FMN</keyword>
<keyword id="KW-0456">Lyase</keyword>
<keyword id="KW-0521">NADP</keyword>
<accession>C1CL83</accession>
<evidence type="ECO:0000255" key="1">
    <source>
        <dbReference type="HAMAP-Rule" id="MF_00300"/>
    </source>
</evidence>
<sequence>MRYLTAGESHGPRLTAIIEGIPAGLPLTAEDINEDLRRRQGGYGRGGRMKIESDQVVFTSGVRHGKTTGAPITMDVINKDHQKWLDIMSAEDIEDRLKSKRKITHPRPGHADLVGGIKYRFDDLRNSLERSSARETTMRVAVGAVAKRLLAELDMEIANHVVVFGGKEIDVPENLTVAEIKQRAAQSEVSIVNQEREQEIKDYIDQIKRDGDTIGGVVETVVGGVPVGLGSYVQWDRKLDARLAQAVVSINAFKGVEFGLGFEAGYRKGSQVMDEILWSKEDGYTRRTNNLGGFEGGMTNGQPIVVRGVMKPIPTLYKPLMSVDIETHEPYKATVERSDPTALPAAGMVMEAVVATVLAQEILEKFSSDNLEELKEAVAKHRDYTKNY</sequence>
<protein>
    <recommendedName>
        <fullName evidence="1">Chorismate synthase</fullName>
        <shortName evidence="1">CS</shortName>
        <ecNumber evidence="1">4.2.3.5</ecNumber>
    </recommendedName>
    <alternativeName>
        <fullName evidence="1">5-enolpyruvylshikimate-3-phosphate phospholyase</fullName>
    </alternativeName>
</protein>
<gene>
    <name evidence="1" type="primary">aroC</name>
    <name type="ordered locus">SPP_1394</name>
</gene>
<dbReference type="EC" id="4.2.3.5" evidence="1"/>
<dbReference type="EMBL" id="CP000920">
    <property type="protein sequence ID" value="ACO22043.1"/>
    <property type="molecule type" value="Genomic_DNA"/>
</dbReference>
<dbReference type="RefSeq" id="WP_001269866.1">
    <property type="nucleotide sequence ID" value="NC_012467.1"/>
</dbReference>
<dbReference type="SMR" id="C1CL83"/>
<dbReference type="KEGG" id="spp:SPP_1394"/>
<dbReference type="HOGENOM" id="CLU_034547_2_0_9"/>
<dbReference type="UniPathway" id="UPA00053">
    <property type="reaction ID" value="UER00090"/>
</dbReference>
<dbReference type="GO" id="GO:0005829">
    <property type="term" value="C:cytosol"/>
    <property type="evidence" value="ECO:0007669"/>
    <property type="project" value="TreeGrafter"/>
</dbReference>
<dbReference type="GO" id="GO:0004107">
    <property type="term" value="F:chorismate synthase activity"/>
    <property type="evidence" value="ECO:0007669"/>
    <property type="project" value="UniProtKB-UniRule"/>
</dbReference>
<dbReference type="GO" id="GO:0010181">
    <property type="term" value="F:FMN binding"/>
    <property type="evidence" value="ECO:0007669"/>
    <property type="project" value="TreeGrafter"/>
</dbReference>
<dbReference type="GO" id="GO:0008652">
    <property type="term" value="P:amino acid biosynthetic process"/>
    <property type="evidence" value="ECO:0007669"/>
    <property type="project" value="UniProtKB-KW"/>
</dbReference>
<dbReference type="GO" id="GO:0009073">
    <property type="term" value="P:aromatic amino acid family biosynthetic process"/>
    <property type="evidence" value="ECO:0007669"/>
    <property type="project" value="UniProtKB-KW"/>
</dbReference>
<dbReference type="GO" id="GO:0009423">
    <property type="term" value="P:chorismate biosynthetic process"/>
    <property type="evidence" value="ECO:0007669"/>
    <property type="project" value="UniProtKB-UniRule"/>
</dbReference>
<dbReference type="CDD" id="cd07304">
    <property type="entry name" value="Chorismate_synthase"/>
    <property type="match status" value="1"/>
</dbReference>
<dbReference type="FunFam" id="3.60.150.10:FF:000002">
    <property type="entry name" value="Chorismate synthase"/>
    <property type="match status" value="1"/>
</dbReference>
<dbReference type="Gene3D" id="3.60.150.10">
    <property type="entry name" value="Chorismate synthase AroC"/>
    <property type="match status" value="1"/>
</dbReference>
<dbReference type="HAMAP" id="MF_00300">
    <property type="entry name" value="Chorismate_synth"/>
    <property type="match status" value="1"/>
</dbReference>
<dbReference type="InterPro" id="IPR000453">
    <property type="entry name" value="Chorismate_synth"/>
</dbReference>
<dbReference type="InterPro" id="IPR035904">
    <property type="entry name" value="Chorismate_synth_AroC_sf"/>
</dbReference>
<dbReference type="InterPro" id="IPR020541">
    <property type="entry name" value="Chorismate_synthase_CS"/>
</dbReference>
<dbReference type="NCBIfam" id="TIGR00033">
    <property type="entry name" value="aroC"/>
    <property type="match status" value="1"/>
</dbReference>
<dbReference type="NCBIfam" id="NF003793">
    <property type="entry name" value="PRK05382.1"/>
    <property type="match status" value="1"/>
</dbReference>
<dbReference type="PANTHER" id="PTHR21085">
    <property type="entry name" value="CHORISMATE SYNTHASE"/>
    <property type="match status" value="1"/>
</dbReference>
<dbReference type="PANTHER" id="PTHR21085:SF0">
    <property type="entry name" value="CHORISMATE SYNTHASE"/>
    <property type="match status" value="1"/>
</dbReference>
<dbReference type="Pfam" id="PF01264">
    <property type="entry name" value="Chorismate_synt"/>
    <property type="match status" value="1"/>
</dbReference>
<dbReference type="PIRSF" id="PIRSF001456">
    <property type="entry name" value="Chorismate_synth"/>
    <property type="match status" value="1"/>
</dbReference>
<dbReference type="SUPFAM" id="SSF103263">
    <property type="entry name" value="Chorismate synthase, AroC"/>
    <property type="match status" value="1"/>
</dbReference>
<dbReference type="PROSITE" id="PS00787">
    <property type="entry name" value="CHORISMATE_SYNTHASE_1"/>
    <property type="match status" value="1"/>
</dbReference>
<dbReference type="PROSITE" id="PS00788">
    <property type="entry name" value="CHORISMATE_SYNTHASE_2"/>
    <property type="match status" value="1"/>
</dbReference>
<dbReference type="PROSITE" id="PS00789">
    <property type="entry name" value="CHORISMATE_SYNTHASE_3"/>
    <property type="match status" value="1"/>
</dbReference>
<comment type="function">
    <text evidence="1">Catalyzes the anti-1,4-elimination of the C-3 phosphate and the C-6 proR hydrogen from 5-enolpyruvylshikimate-3-phosphate (EPSP) to yield chorismate, which is the branch point compound that serves as the starting substrate for the three terminal pathways of aromatic amino acid biosynthesis. This reaction introduces a second double bond into the aromatic ring system.</text>
</comment>
<comment type="catalytic activity">
    <reaction evidence="1">
        <text>5-O-(1-carboxyvinyl)-3-phosphoshikimate = chorismate + phosphate</text>
        <dbReference type="Rhea" id="RHEA:21020"/>
        <dbReference type="ChEBI" id="CHEBI:29748"/>
        <dbReference type="ChEBI" id="CHEBI:43474"/>
        <dbReference type="ChEBI" id="CHEBI:57701"/>
        <dbReference type="EC" id="4.2.3.5"/>
    </reaction>
</comment>
<comment type="cofactor">
    <cofactor evidence="1">
        <name>FMNH2</name>
        <dbReference type="ChEBI" id="CHEBI:57618"/>
    </cofactor>
    <text evidence="1">Reduced FMN (FMNH(2)).</text>
</comment>
<comment type="pathway">
    <text evidence="1">Metabolic intermediate biosynthesis; chorismate biosynthesis; chorismate from D-erythrose 4-phosphate and phosphoenolpyruvate: step 7/7.</text>
</comment>
<comment type="subunit">
    <text evidence="1">Homotetramer.</text>
</comment>
<comment type="similarity">
    <text evidence="1">Belongs to the chorismate synthase family.</text>
</comment>
<organism>
    <name type="scientific">Streptococcus pneumoniae (strain P1031)</name>
    <dbReference type="NCBI Taxonomy" id="488223"/>
    <lineage>
        <taxon>Bacteria</taxon>
        <taxon>Bacillati</taxon>
        <taxon>Bacillota</taxon>
        <taxon>Bacilli</taxon>
        <taxon>Lactobacillales</taxon>
        <taxon>Streptococcaceae</taxon>
        <taxon>Streptococcus</taxon>
    </lineage>
</organism>
<feature type="chain" id="PRO_1000132793" description="Chorismate synthase">
    <location>
        <begin position="1"/>
        <end position="388"/>
    </location>
</feature>
<feature type="binding site" evidence="1">
    <location>
        <position position="39"/>
    </location>
    <ligand>
        <name>NADP(+)</name>
        <dbReference type="ChEBI" id="CHEBI:58349"/>
    </ligand>
</feature>
<feature type="binding site" evidence="1">
    <location>
        <position position="45"/>
    </location>
    <ligand>
        <name>NADP(+)</name>
        <dbReference type="ChEBI" id="CHEBI:58349"/>
    </ligand>
</feature>
<feature type="binding site" evidence="1">
    <location>
        <begin position="130"/>
        <end position="132"/>
    </location>
    <ligand>
        <name>FMN</name>
        <dbReference type="ChEBI" id="CHEBI:58210"/>
    </ligand>
</feature>
<feature type="binding site" evidence="1">
    <location>
        <begin position="251"/>
        <end position="252"/>
    </location>
    <ligand>
        <name>FMN</name>
        <dbReference type="ChEBI" id="CHEBI:58210"/>
    </ligand>
</feature>
<feature type="binding site" evidence="1">
    <location>
        <position position="296"/>
    </location>
    <ligand>
        <name>FMN</name>
        <dbReference type="ChEBI" id="CHEBI:58210"/>
    </ligand>
</feature>
<feature type="binding site" evidence="1">
    <location>
        <begin position="311"/>
        <end position="315"/>
    </location>
    <ligand>
        <name>FMN</name>
        <dbReference type="ChEBI" id="CHEBI:58210"/>
    </ligand>
</feature>
<feature type="binding site" evidence="1">
    <location>
        <position position="337"/>
    </location>
    <ligand>
        <name>FMN</name>
        <dbReference type="ChEBI" id="CHEBI:58210"/>
    </ligand>
</feature>